<reference key="1">
    <citation type="journal article" date="2000" name="Nature">
        <title>Sequence and analysis of chromosome 1 of the plant Arabidopsis thaliana.</title>
        <authorList>
            <person name="Theologis A."/>
            <person name="Ecker J.R."/>
            <person name="Palm C.J."/>
            <person name="Federspiel N.A."/>
            <person name="Kaul S."/>
            <person name="White O."/>
            <person name="Alonso J."/>
            <person name="Altafi H."/>
            <person name="Araujo R."/>
            <person name="Bowman C.L."/>
            <person name="Brooks S.Y."/>
            <person name="Buehler E."/>
            <person name="Chan A."/>
            <person name="Chao Q."/>
            <person name="Chen H."/>
            <person name="Cheuk R.F."/>
            <person name="Chin C.W."/>
            <person name="Chung M.K."/>
            <person name="Conn L."/>
            <person name="Conway A.B."/>
            <person name="Conway A.R."/>
            <person name="Creasy T.H."/>
            <person name="Dewar K."/>
            <person name="Dunn P."/>
            <person name="Etgu P."/>
            <person name="Feldblyum T.V."/>
            <person name="Feng J.-D."/>
            <person name="Fong B."/>
            <person name="Fujii C.Y."/>
            <person name="Gill J.E."/>
            <person name="Goldsmith A.D."/>
            <person name="Haas B."/>
            <person name="Hansen N.F."/>
            <person name="Hughes B."/>
            <person name="Huizar L."/>
            <person name="Hunter J.L."/>
            <person name="Jenkins J."/>
            <person name="Johnson-Hopson C."/>
            <person name="Khan S."/>
            <person name="Khaykin E."/>
            <person name="Kim C.J."/>
            <person name="Koo H.L."/>
            <person name="Kremenetskaia I."/>
            <person name="Kurtz D.B."/>
            <person name="Kwan A."/>
            <person name="Lam B."/>
            <person name="Langin-Hooper S."/>
            <person name="Lee A."/>
            <person name="Lee J.M."/>
            <person name="Lenz C.A."/>
            <person name="Li J.H."/>
            <person name="Li Y.-P."/>
            <person name="Lin X."/>
            <person name="Liu S.X."/>
            <person name="Liu Z.A."/>
            <person name="Luros J.S."/>
            <person name="Maiti R."/>
            <person name="Marziali A."/>
            <person name="Militscher J."/>
            <person name="Miranda M."/>
            <person name="Nguyen M."/>
            <person name="Nierman W.C."/>
            <person name="Osborne B.I."/>
            <person name="Pai G."/>
            <person name="Peterson J."/>
            <person name="Pham P.K."/>
            <person name="Rizzo M."/>
            <person name="Rooney T."/>
            <person name="Rowley D."/>
            <person name="Sakano H."/>
            <person name="Salzberg S.L."/>
            <person name="Schwartz J.R."/>
            <person name="Shinn P."/>
            <person name="Southwick A.M."/>
            <person name="Sun H."/>
            <person name="Tallon L.J."/>
            <person name="Tambunga G."/>
            <person name="Toriumi M.J."/>
            <person name="Town C.D."/>
            <person name="Utterback T."/>
            <person name="Van Aken S."/>
            <person name="Vaysberg M."/>
            <person name="Vysotskaia V.S."/>
            <person name="Walker M."/>
            <person name="Wu D."/>
            <person name="Yu G."/>
            <person name="Fraser C.M."/>
            <person name="Venter J.C."/>
            <person name="Davis R.W."/>
        </authorList>
    </citation>
    <scope>NUCLEOTIDE SEQUENCE [LARGE SCALE GENOMIC DNA]</scope>
    <source>
        <strain>cv. Columbia</strain>
    </source>
</reference>
<reference key="2">
    <citation type="journal article" date="2017" name="Plant J.">
        <title>Araport11: a complete reannotation of the Arabidopsis thaliana reference genome.</title>
        <authorList>
            <person name="Cheng C.Y."/>
            <person name="Krishnakumar V."/>
            <person name="Chan A.P."/>
            <person name="Thibaud-Nissen F."/>
            <person name="Schobel S."/>
            <person name="Town C.D."/>
        </authorList>
    </citation>
    <scope>GENOME REANNOTATION</scope>
    <source>
        <strain>cv. Columbia</strain>
    </source>
</reference>
<reference key="3">
    <citation type="journal article" date="2003" name="Science">
        <title>Empirical analysis of transcriptional activity in the Arabidopsis genome.</title>
        <authorList>
            <person name="Yamada K."/>
            <person name="Lim J."/>
            <person name="Dale J.M."/>
            <person name="Chen H."/>
            <person name="Shinn P."/>
            <person name="Palm C.J."/>
            <person name="Southwick A.M."/>
            <person name="Wu H.C."/>
            <person name="Kim C.J."/>
            <person name="Nguyen M."/>
            <person name="Pham P.K."/>
            <person name="Cheuk R.F."/>
            <person name="Karlin-Newmann G."/>
            <person name="Liu S.X."/>
            <person name="Lam B."/>
            <person name="Sakano H."/>
            <person name="Wu T."/>
            <person name="Yu G."/>
            <person name="Miranda M."/>
            <person name="Quach H.L."/>
            <person name="Tripp M."/>
            <person name="Chang C.H."/>
            <person name="Lee J.M."/>
            <person name="Toriumi M.J."/>
            <person name="Chan M.M."/>
            <person name="Tang C.C."/>
            <person name="Onodera C.S."/>
            <person name="Deng J.M."/>
            <person name="Akiyama K."/>
            <person name="Ansari Y."/>
            <person name="Arakawa T."/>
            <person name="Banh J."/>
            <person name="Banno F."/>
            <person name="Bowser L."/>
            <person name="Brooks S.Y."/>
            <person name="Carninci P."/>
            <person name="Chao Q."/>
            <person name="Choy N."/>
            <person name="Enju A."/>
            <person name="Goldsmith A.D."/>
            <person name="Gurjal M."/>
            <person name="Hansen N.F."/>
            <person name="Hayashizaki Y."/>
            <person name="Johnson-Hopson C."/>
            <person name="Hsuan V.W."/>
            <person name="Iida K."/>
            <person name="Karnes M."/>
            <person name="Khan S."/>
            <person name="Koesema E."/>
            <person name="Ishida J."/>
            <person name="Jiang P.X."/>
            <person name="Jones T."/>
            <person name="Kawai J."/>
            <person name="Kamiya A."/>
            <person name="Meyers C."/>
            <person name="Nakajima M."/>
            <person name="Narusaka M."/>
            <person name="Seki M."/>
            <person name="Sakurai T."/>
            <person name="Satou M."/>
            <person name="Tamse R."/>
            <person name="Vaysberg M."/>
            <person name="Wallender E.K."/>
            <person name="Wong C."/>
            <person name="Yamamura Y."/>
            <person name="Yuan S."/>
            <person name="Shinozaki K."/>
            <person name="Davis R.W."/>
            <person name="Theologis A."/>
            <person name="Ecker J.R."/>
        </authorList>
    </citation>
    <scope>NUCLEOTIDE SEQUENCE [LARGE SCALE MRNA]</scope>
    <source>
        <strain>cv. Columbia</strain>
    </source>
</reference>
<organism>
    <name type="scientific">Arabidopsis thaliana</name>
    <name type="common">Mouse-ear cress</name>
    <dbReference type="NCBI Taxonomy" id="3702"/>
    <lineage>
        <taxon>Eukaryota</taxon>
        <taxon>Viridiplantae</taxon>
        <taxon>Streptophyta</taxon>
        <taxon>Embryophyta</taxon>
        <taxon>Tracheophyta</taxon>
        <taxon>Spermatophyta</taxon>
        <taxon>Magnoliopsida</taxon>
        <taxon>eudicotyledons</taxon>
        <taxon>Gunneridae</taxon>
        <taxon>Pentapetalae</taxon>
        <taxon>rosids</taxon>
        <taxon>malvids</taxon>
        <taxon>Brassicales</taxon>
        <taxon>Brassicaceae</taxon>
        <taxon>Camelineae</taxon>
        <taxon>Arabidopsis</taxon>
    </lineage>
</organism>
<sequence>MHPKRSSQGDGSVTKPVRTSDRLRRRPKLHGRSYLYYSSPNMLHNRKRNTKTRTAASQIAKMLHKGNRPARASNAAPIASDLRRSTRKRRISVNLEDYTDSSGAEDEDMMSPAYRTLRRRVHKNFSTSKSRKDMDAELAPRREGLRPRRSTTIANKRLKTESGADQDTSEEKDGQDETENGNELDDADDGENEVEAEDEGNGEDEGDGEDEGEEDGDDDEEGDEEQEGRKRYDLRNRAEVRRMPTGEINKQQQPRSPRRVLHQGMGTRVGRDGRRGGSRPHKRHRFTRTDDSDDSLLVDELDQGPAIPWARGGNRSGAPWLFGGLDTYGSSSLGLNVGASGWGHQSDGLAALTSGVQTAGPSSKGGADIQPLQINEDINFDDIGGLSEYINDLKEMVFFPLLYPEFFASYSITPPRGVLLCGPPGTGKTLIARALACAASKAGQKVSFYMRKGADVLSKWVGEAERQLKLLFEEAQRNQPSIIFFDEIDGLAPVRSSKQEQIHNSIVSTLLALMDGLDSRGQVVLIGATNRVDAIDGALRRPGRFDREFNFSLPGCEARAEILDIHTRKWKHPPTRELKEELAATCVGYCGADLKALCTEAAIRAFREKYPQVYTSDDKYAIDVGLVNVEKSHFVEAMSAITPAAHRGSVVQSRPLSPVVLPCLHRHLLESMSLISDIFPSSATSSELTKLSILTFGSAIPLVYRPRLLLLGGEGVGLDHLGPAILHELEKFPIHSLGLPSLLSDPGAKTPEEALVHIFSEARRTTPSILYIPMFNNWWENAHEQLRAVFLTLLEELPSNLPILLLATSYGELSDMEEQSVFDNRSVYTVDKPSSEDRSLFFDRLIEAALSVISGLNGKPDGPQPLPELPKVPKEPTGPKPAEVKAKVEAEQHALRRLRMCLRDVCNRILYDKRFSAFHFPVTDEDAPNYRSIIQIPMDTATLLQRVDTGQYLTCTPFLQDVDLIVRNAKAYNGDDYAGARIVSRAYELRDVVHGMLSQMDPALLTYCDKIAAEGGPSLIPDDLSGSILGLAPVVQMGTVTRTSARLRNVQPEVNLDRDYEGLKKPKKTTDAVSIDSAADKSQNQDSGQEMPSPDAANPQSAAPSPTDGDREDQSEPPSKEASAEDMSGDSCKGPAAKSDKEISSRTESVKGVFMERTDNYSIPQMERLYTRIMKGVLETLDKGLRDDDNNPKHSILRFLSEFAQHQANF</sequence>
<dbReference type="EMBL" id="AC009999">
    <property type="protein sequence ID" value="AAF29398.1"/>
    <property type="status" value="ALT_SEQ"/>
    <property type="molecule type" value="Genomic_DNA"/>
</dbReference>
<dbReference type="EMBL" id="CP002684">
    <property type="protein sequence ID" value="AEE27917.1"/>
    <property type="molecule type" value="Genomic_DNA"/>
</dbReference>
<dbReference type="EMBL" id="AY056785">
    <property type="protein sequence ID" value="AAL10476.1"/>
    <property type="molecule type" value="mRNA"/>
</dbReference>
<dbReference type="EMBL" id="BT002728">
    <property type="protein sequence ID" value="AAO11644.1"/>
    <property type="molecule type" value="mRNA"/>
</dbReference>
<dbReference type="PIR" id="B86194">
    <property type="entry name" value="B86194"/>
</dbReference>
<dbReference type="RefSeq" id="NP_563753.1">
    <property type="nucleotide sequence ID" value="NM_100472.2"/>
</dbReference>
<dbReference type="SMR" id="F4IAE9"/>
<dbReference type="FunCoup" id="F4IAE9">
    <property type="interactions" value="3342"/>
</dbReference>
<dbReference type="STRING" id="3702.F4IAE9"/>
<dbReference type="GlyGen" id="F4IAE9">
    <property type="glycosylation" value="3 sites"/>
</dbReference>
<dbReference type="iPTMnet" id="F4IAE9"/>
<dbReference type="PaxDb" id="3702-AT1G05910.1"/>
<dbReference type="ProteomicsDB" id="242985"/>
<dbReference type="EnsemblPlants" id="AT1G05910.1">
    <property type="protein sequence ID" value="AT1G05910.1"/>
    <property type="gene ID" value="AT1G05910"/>
</dbReference>
<dbReference type="GeneID" id="837101"/>
<dbReference type="Gramene" id="AT1G05910.1">
    <property type="protein sequence ID" value="AT1G05910.1"/>
    <property type="gene ID" value="AT1G05910"/>
</dbReference>
<dbReference type="KEGG" id="ath:AT1G05910"/>
<dbReference type="Araport" id="AT1G05910"/>
<dbReference type="TAIR" id="AT1G05910">
    <property type="gene designation" value="BRAT1"/>
</dbReference>
<dbReference type="eggNOG" id="KOG0732">
    <property type="taxonomic scope" value="Eukaryota"/>
</dbReference>
<dbReference type="HOGENOM" id="CLU_007111_0_0_1"/>
<dbReference type="InParanoid" id="F4IAE9"/>
<dbReference type="OMA" id="YNPAIRK"/>
<dbReference type="PRO" id="PR:F4IAE9"/>
<dbReference type="Proteomes" id="UP000006548">
    <property type="component" value="Chromosome 1"/>
</dbReference>
<dbReference type="ExpressionAtlas" id="F4IAE9">
    <property type="expression patterns" value="baseline and differential"/>
</dbReference>
<dbReference type="GO" id="GO:0005524">
    <property type="term" value="F:ATP binding"/>
    <property type="evidence" value="ECO:0007669"/>
    <property type="project" value="UniProtKB-KW"/>
</dbReference>
<dbReference type="GO" id="GO:0016887">
    <property type="term" value="F:ATP hydrolysis activity"/>
    <property type="evidence" value="ECO:0007669"/>
    <property type="project" value="InterPro"/>
</dbReference>
<dbReference type="GO" id="GO:0042393">
    <property type="term" value="F:histone binding"/>
    <property type="evidence" value="ECO:0000314"/>
    <property type="project" value="TAIR"/>
</dbReference>
<dbReference type="CDD" id="cd05528">
    <property type="entry name" value="Bromo_AAA"/>
    <property type="match status" value="1"/>
</dbReference>
<dbReference type="FunFam" id="1.20.920.10:FF:000037">
    <property type="entry name" value="ATPase family AAA domain-containing protein"/>
    <property type="match status" value="1"/>
</dbReference>
<dbReference type="FunFam" id="1.10.8.60:FF:000016">
    <property type="entry name" value="ATPase family AAA domain-containing protein 2B"/>
    <property type="match status" value="1"/>
</dbReference>
<dbReference type="FunFam" id="3.40.50.300:FF:000061">
    <property type="entry name" value="ATPase family, AAA domain-containing 2"/>
    <property type="match status" value="1"/>
</dbReference>
<dbReference type="Gene3D" id="1.10.8.60">
    <property type="match status" value="1"/>
</dbReference>
<dbReference type="Gene3D" id="1.20.920.10">
    <property type="entry name" value="Bromodomain-like"/>
    <property type="match status" value="1"/>
</dbReference>
<dbReference type="Gene3D" id="3.40.50.300">
    <property type="entry name" value="P-loop containing nucleotide triphosphate hydrolases"/>
    <property type="match status" value="1"/>
</dbReference>
<dbReference type="InterPro" id="IPR003593">
    <property type="entry name" value="AAA+_ATPase"/>
</dbReference>
<dbReference type="InterPro" id="IPR041569">
    <property type="entry name" value="AAA_lid_3"/>
</dbReference>
<dbReference type="InterPro" id="IPR045199">
    <property type="entry name" value="ATAD2-like"/>
</dbReference>
<dbReference type="InterPro" id="IPR003959">
    <property type="entry name" value="ATPase_AAA_core"/>
</dbReference>
<dbReference type="InterPro" id="IPR003960">
    <property type="entry name" value="ATPase_AAA_CS"/>
</dbReference>
<dbReference type="InterPro" id="IPR001487">
    <property type="entry name" value="Bromodomain"/>
</dbReference>
<dbReference type="InterPro" id="IPR036427">
    <property type="entry name" value="Bromodomain-like_sf"/>
</dbReference>
<dbReference type="InterPro" id="IPR027417">
    <property type="entry name" value="P-loop_NTPase"/>
</dbReference>
<dbReference type="PANTHER" id="PTHR23069">
    <property type="entry name" value="AAA DOMAIN-CONTAINING"/>
    <property type="match status" value="1"/>
</dbReference>
<dbReference type="PANTHER" id="PTHR23069:SF0">
    <property type="entry name" value="TAT-BINDING HOMOLOG 7"/>
    <property type="match status" value="1"/>
</dbReference>
<dbReference type="Pfam" id="PF00004">
    <property type="entry name" value="AAA"/>
    <property type="match status" value="1"/>
</dbReference>
<dbReference type="Pfam" id="PF17862">
    <property type="entry name" value="AAA_lid_3"/>
    <property type="match status" value="1"/>
</dbReference>
<dbReference type="Pfam" id="PF00439">
    <property type="entry name" value="Bromodomain"/>
    <property type="match status" value="1"/>
</dbReference>
<dbReference type="PRINTS" id="PR00503">
    <property type="entry name" value="BROMODOMAIN"/>
</dbReference>
<dbReference type="SMART" id="SM00382">
    <property type="entry name" value="AAA"/>
    <property type="match status" value="1"/>
</dbReference>
<dbReference type="SMART" id="SM00297">
    <property type="entry name" value="BROMO"/>
    <property type="match status" value="1"/>
</dbReference>
<dbReference type="SUPFAM" id="SSF47370">
    <property type="entry name" value="Bromodomain"/>
    <property type="match status" value="1"/>
</dbReference>
<dbReference type="SUPFAM" id="SSF52540">
    <property type="entry name" value="P-loop containing nucleoside triphosphate hydrolases"/>
    <property type="match status" value="2"/>
</dbReference>
<dbReference type="PROSITE" id="PS00674">
    <property type="entry name" value="AAA"/>
    <property type="match status" value="1"/>
</dbReference>
<dbReference type="PROSITE" id="PS00633">
    <property type="entry name" value="BROMODOMAIN_1"/>
    <property type="match status" value="1"/>
</dbReference>
<dbReference type="PROSITE" id="PS50014">
    <property type="entry name" value="BROMODOMAIN_2"/>
    <property type="match status" value="1"/>
</dbReference>
<protein>
    <recommendedName>
        <fullName>ATPase family AAA domain-containing protein At1g05910</fullName>
    </recommendedName>
</protein>
<comment type="similarity">
    <text evidence="4">Belongs to the AAA ATPase family.</text>
</comment>
<comment type="sequence caution" evidence="4">
    <conflict type="erroneous gene model prediction">
        <sequence resource="EMBL-CDS" id="AAF29398"/>
    </conflict>
</comment>
<feature type="chain" id="PRO_0000415737" description="ATPase family AAA domain-containing protein At1g05910">
    <location>
        <begin position="1"/>
        <end position="1210"/>
    </location>
</feature>
<feature type="domain" description="Bromo" evidence="2">
    <location>
        <begin position="897"/>
        <end position="1000"/>
    </location>
</feature>
<feature type="region of interest" description="Disordered" evidence="3">
    <location>
        <begin position="1"/>
        <end position="32"/>
    </location>
</feature>
<feature type="region of interest" description="Disordered" evidence="3">
    <location>
        <begin position="63"/>
        <end position="291"/>
    </location>
</feature>
<feature type="region of interest" description="Disordered" evidence="3">
    <location>
        <begin position="856"/>
        <end position="883"/>
    </location>
</feature>
<feature type="region of interest" description="Disordered" evidence="3">
    <location>
        <begin position="1057"/>
        <end position="1151"/>
    </location>
</feature>
<feature type="compositionally biased region" description="Polar residues" evidence="3">
    <location>
        <begin position="1"/>
        <end position="11"/>
    </location>
</feature>
<feature type="compositionally biased region" description="Acidic residues" evidence="3">
    <location>
        <begin position="97"/>
        <end position="109"/>
    </location>
</feature>
<feature type="compositionally biased region" description="Basic and acidic residues" evidence="3">
    <location>
        <begin position="130"/>
        <end position="146"/>
    </location>
</feature>
<feature type="compositionally biased region" description="Acidic residues" evidence="3">
    <location>
        <begin position="167"/>
        <end position="226"/>
    </location>
</feature>
<feature type="compositionally biased region" description="Basic and acidic residues" evidence="3">
    <location>
        <begin position="227"/>
        <end position="244"/>
    </location>
</feature>
<feature type="compositionally biased region" description="Basic residues" evidence="3">
    <location>
        <begin position="276"/>
        <end position="286"/>
    </location>
</feature>
<feature type="compositionally biased region" description="Basic and acidic residues" evidence="3">
    <location>
        <begin position="1057"/>
        <end position="1070"/>
    </location>
</feature>
<feature type="compositionally biased region" description="Polar residues" evidence="3">
    <location>
        <begin position="1080"/>
        <end position="1090"/>
    </location>
</feature>
<feature type="compositionally biased region" description="Basic and acidic residues" evidence="3">
    <location>
        <begin position="1108"/>
        <end position="1123"/>
    </location>
</feature>
<feature type="compositionally biased region" description="Basic and acidic residues" evidence="3">
    <location>
        <begin position="1138"/>
        <end position="1151"/>
    </location>
</feature>
<feature type="binding site" evidence="1">
    <location>
        <begin position="422"/>
        <end position="429"/>
    </location>
    <ligand>
        <name>ATP</name>
        <dbReference type="ChEBI" id="CHEBI:30616"/>
    </ligand>
</feature>
<feature type="sequence conflict" description="In Ref. 3; AAO11644/AAL10476." evidence="4" ref="3">
    <original>D</original>
    <variation>N</variation>
    <location>
        <position position="515"/>
    </location>
</feature>
<keyword id="KW-0067">ATP-binding</keyword>
<keyword id="KW-0103">Bromodomain</keyword>
<keyword id="KW-0547">Nucleotide-binding</keyword>
<keyword id="KW-1185">Reference proteome</keyword>
<evidence type="ECO:0000255" key="1"/>
<evidence type="ECO:0000255" key="2">
    <source>
        <dbReference type="PROSITE-ProRule" id="PRU00035"/>
    </source>
</evidence>
<evidence type="ECO:0000256" key="3">
    <source>
        <dbReference type="SAM" id="MobiDB-lite"/>
    </source>
</evidence>
<evidence type="ECO:0000305" key="4"/>
<gene>
    <name type="ordered locus">At1g05910</name>
    <name type="ORF">T20M3.19</name>
</gene>
<accession>F4IAE9</accession>
<accession>Q93ZM5</accession>
<accession>Q9MA34</accession>
<name>Y1591_ARATH</name>
<proteinExistence type="evidence at transcript level"/>